<evidence type="ECO:0000255" key="1">
    <source>
        <dbReference type="HAMAP-Rule" id="MF_00435"/>
    </source>
</evidence>
<evidence type="ECO:0000255" key="2">
    <source>
        <dbReference type="PROSITE-ProRule" id="PRU01197"/>
    </source>
</evidence>
<evidence type="ECO:0000255" key="3">
    <source>
        <dbReference type="PROSITE-ProRule" id="PRU01198"/>
    </source>
</evidence>
<sequence length="492" mass="54293">MANYFNTLSLREKLDQLGVCEFMDRSEFSDGVAALKGKKIVIVGCGAQGLNQGLNLRDSGLDVSYTLRKEAIDSKRQSFLNASENGFKVGTYEELIPTADLVINLTPDKQHTAVVSAVMPLMKKGSTLSYSHGFNIVEEGMQIRKDITVIMVAPKSPGSEVREEYKRGFGVPTLIAVHPENDPEGKGWDYAKAYCVGTGGDRAGVLKSSFVAEVKSDLMGEQTILCGLLQTGSILCFDKMVEKGIDKGYASKLIQYGWEVITESLKHGGISGMMDRLSNPAKIKAFQVSEELKDIMRPLFRKHQDDIISGEFSRIMMEDWANGDKNLLTWRAATGETAFEKTPAGDVKIAEQEYYDNGLLMVAMVRAGVELAFETMTESGIIDESAYYESLHETPLIANTIARKKLFEMNRVISDTAEYGCYLFDHACKPLLANFMKTVDTDIIGKNFNAGKDNGVDNQMLIAVNEVLRSHPIEIVGAELREAMTEMKAIVS</sequence>
<dbReference type="EC" id="1.1.1.86" evidence="1"/>
<dbReference type="EMBL" id="CP000383">
    <property type="protein sequence ID" value="ABG58424.1"/>
    <property type="molecule type" value="Genomic_DNA"/>
</dbReference>
<dbReference type="RefSeq" id="WP_011584538.1">
    <property type="nucleotide sequence ID" value="NC_008255.1"/>
</dbReference>
<dbReference type="SMR" id="Q11VZ3"/>
<dbReference type="STRING" id="269798.CHU_1149"/>
<dbReference type="KEGG" id="chu:CHU_1149"/>
<dbReference type="eggNOG" id="COG0059">
    <property type="taxonomic scope" value="Bacteria"/>
</dbReference>
<dbReference type="HOGENOM" id="CLU_551905_0_0_10"/>
<dbReference type="OrthoDB" id="9804088at2"/>
<dbReference type="UniPathway" id="UPA00047">
    <property type="reaction ID" value="UER00056"/>
</dbReference>
<dbReference type="UniPathway" id="UPA00049">
    <property type="reaction ID" value="UER00060"/>
</dbReference>
<dbReference type="Proteomes" id="UP000001822">
    <property type="component" value="Chromosome"/>
</dbReference>
<dbReference type="GO" id="GO:0005829">
    <property type="term" value="C:cytosol"/>
    <property type="evidence" value="ECO:0007669"/>
    <property type="project" value="TreeGrafter"/>
</dbReference>
<dbReference type="GO" id="GO:0004455">
    <property type="term" value="F:ketol-acid reductoisomerase activity"/>
    <property type="evidence" value="ECO:0007669"/>
    <property type="project" value="UniProtKB-UniRule"/>
</dbReference>
<dbReference type="GO" id="GO:0000287">
    <property type="term" value="F:magnesium ion binding"/>
    <property type="evidence" value="ECO:0007669"/>
    <property type="project" value="UniProtKB-UniRule"/>
</dbReference>
<dbReference type="GO" id="GO:0009097">
    <property type="term" value="P:isoleucine biosynthetic process"/>
    <property type="evidence" value="ECO:0007669"/>
    <property type="project" value="UniProtKB-UniRule"/>
</dbReference>
<dbReference type="GO" id="GO:0009099">
    <property type="term" value="P:L-valine biosynthetic process"/>
    <property type="evidence" value="ECO:0007669"/>
    <property type="project" value="UniProtKB-UniRule"/>
</dbReference>
<dbReference type="Gene3D" id="1.10.1040.10">
    <property type="entry name" value="N-(1-d-carboxylethyl)-l-norvaline Dehydrogenase, domain 2"/>
    <property type="match status" value="1"/>
</dbReference>
<dbReference type="Gene3D" id="3.40.50.720">
    <property type="entry name" value="NAD(P)-binding Rossmann-like Domain"/>
    <property type="match status" value="1"/>
</dbReference>
<dbReference type="HAMAP" id="MF_00435">
    <property type="entry name" value="IlvC"/>
    <property type="match status" value="1"/>
</dbReference>
<dbReference type="InterPro" id="IPR008927">
    <property type="entry name" value="6-PGluconate_DH-like_C_sf"/>
</dbReference>
<dbReference type="InterPro" id="IPR013328">
    <property type="entry name" value="6PGD_dom2"/>
</dbReference>
<dbReference type="InterPro" id="IPR013023">
    <property type="entry name" value="KARI"/>
</dbReference>
<dbReference type="InterPro" id="IPR000506">
    <property type="entry name" value="KARI_C"/>
</dbReference>
<dbReference type="InterPro" id="IPR013116">
    <property type="entry name" value="KARI_N"/>
</dbReference>
<dbReference type="InterPro" id="IPR036291">
    <property type="entry name" value="NAD(P)-bd_dom_sf"/>
</dbReference>
<dbReference type="NCBIfam" id="TIGR00465">
    <property type="entry name" value="ilvC"/>
    <property type="match status" value="1"/>
</dbReference>
<dbReference type="NCBIfam" id="NF003557">
    <property type="entry name" value="PRK05225.1"/>
    <property type="match status" value="1"/>
</dbReference>
<dbReference type="PANTHER" id="PTHR21371">
    <property type="entry name" value="KETOL-ACID REDUCTOISOMERASE, MITOCHONDRIAL"/>
    <property type="match status" value="1"/>
</dbReference>
<dbReference type="PANTHER" id="PTHR21371:SF1">
    <property type="entry name" value="KETOL-ACID REDUCTOISOMERASE, MITOCHONDRIAL"/>
    <property type="match status" value="1"/>
</dbReference>
<dbReference type="Pfam" id="PF01450">
    <property type="entry name" value="KARI_C"/>
    <property type="match status" value="2"/>
</dbReference>
<dbReference type="Pfam" id="PF07991">
    <property type="entry name" value="KARI_N"/>
    <property type="match status" value="1"/>
</dbReference>
<dbReference type="SUPFAM" id="SSF48179">
    <property type="entry name" value="6-phosphogluconate dehydrogenase C-terminal domain-like"/>
    <property type="match status" value="2"/>
</dbReference>
<dbReference type="SUPFAM" id="SSF51735">
    <property type="entry name" value="NAD(P)-binding Rossmann-fold domains"/>
    <property type="match status" value="1"/>
</dbReference>
<dbReference type="PROSITE" id="PS51851">
    <property type="entry name" value="KARI_C"/>
    <property type="match status" value="2"/>
</dbReference>
<dbReference type="PROSITE" id="PS51850">
    <property type="entry name" value="KARI_N"/>
    <property type="match status" value="1"/>
</dbReference>
<comment type="function">
    <text evidence="1">Involved in the biosynthesis of branched-chain amino acids (BCAA). Catalyzes an alkyl-migration followed by a ketol-acid reduction of (S)-2-acetolactate (S2AL) to yield (R)-2,3-dihydroxy-isovalerate. In the isomerase reaction, S2AL is rearranged via a Mg-dependent methyl migration to produce 3-hydroxy-3-methyl-2-ketobutyrate (HMKB). In the reductase reaction, this 2-ketoacid undergoes a metal-dependent reduction by NADPH to yield (R)-2,3-dihydroxy-isovalerate.</text>
</comment>
<comment type="catalytic activity">
    <reaction evidence="1">
        <text>(2R)-2,3-dihydroxy-3-methylbutanoate + NADP(+) = (2S)-2-acetolactate + NADPH + H(+)</text>
        <dbReference type="Rhea" id="RHEA:22068"/>
        <dbReference type="ChEBI" id="CHEBI:15378"/>
        <dbReference type="ChEBI" id="CHEBI:49072"/>
        <dbReference type="ChEBI" id="CHEBI:57783"/>
        <dbReference type="ChEBI" id="CHEBI:58349"/>
        <dbReference type="ChEBI" id="CHEBI:58476"/>
        <dbReference type="EC" id="1.1.1.86"/>
    </reaction>
</comment>
<comment type="catalytic activity">
    <reaction evidence="1">
        <text>(2R,3R)-2,3-dihydroxy-3-methylpentanoate + NADP(+) = (S)-2-ethyl-2-hydroxy-3-oxobutanoate + NADPH + H(+)</text>
        <dbReference type="Rhea" id="RHEA:13493"/>
        <dbReference type="ChEBI" id="CHEBI:15378"/>
        <dbReference type="ChEBI" id="CHEBI:49256"/>
        <dbReference type="ChEBI" id="CHEBI:49258"/>
        <dbReference type="ChEBI" id="CHEBI:57783"/>
        <dbReference type="ChEBI" id="CHEBI:58349"/>
        <dbReference type="EC" id="1.1.1.86"/>
    </reaction>
</comment>
<comment type="cofactor">
    <cofactor evidence="1">
        <name>Mg(2+)</name>
        <dbReference type="ChEBI" id="CHEBI:18420"/>
    </cofactor>
    <text evidence="1">Binds 2 magnesium ions per subunit.</text>
</comment>
<comment type="pathway">
    <text evidence="1">Amino-acid biosynthesis; L-isoleucine biosynthesis; L-isoleucine from 2-oxobutanoate: step 2/4.</text>
</comment>
<comment type="pathway">
    <text evidence="1">Amino-acid biosynthesis; L-valine biosynthesis; L-valine from pyruvate: step 2/4.</text>
</comment>
<comment type="similarity">
    <text evidence="1">Belongs to the ketol-acid reductoisomerase family.</text>
</comment>
<gene>
    <name evidence="1" type="primary">ilvC</name>
    <name type="ordered locus">CHU_1149</name>
</gene>
<accession>Q11VZ3</accession>
<keyword id="KW-0028">Amino-acid biosynthesis</keyword>
<keyword id="KW-0100">Branched-chain amino acid biosynthesis</keyword>
<keyword id="KW-0460">Magnesium</keyword>
<keyword id="KW-0479">Metal-binding</keyword>
<keyword id="KW-0521">NADP</keyword>
<keyword id="KW-0560">Oxidoreductase</keyword>
<keyword id="KW-1185">Reference proteome</keyword>
<keyword id="KW-0677">Repeat</keyword>
<feature type="chain" id="PRO_1000190944" description="Ketol-acid reductoisomerase (NADP(+))">
    <location>
        <begin position="1"/>
        <end position="492"/>
    </location>
</feature>
<feature type="domain" description="KARI N-terminal Rossmann" evidence="2">
    <location>
        <begin position="17"/>
        <end position="208"/>
    </location>
</feature>
<feature type="domain" description="KARI C-terminal knotted 1" evidence="3">
    <location>
        <begin position="209"/>
        <end position="353"/>
    </location>
</feature>
<feature type="domain" description="KARI C-terminal knotted 2" evidence="3">
    <location>
        <begin position="354"/>
        <end position="487"/>
    </location>
</feature>
<feature type="active site" evidence="1">
    <location>
        <position position="132"/>
    </location>
</feature>
<feature type="binding site" evidence="1">
    <location>
        <begin position="45"/>
        <end position="48"/>
    </location>
    <ligand>
        <name>NADP(+)</name>
        <dbReference type="ChEBI" id="CHEBI:58349"/>
    </ligand>
</feature>
<feature type="binding site" evidence="1">
    <location>
        <position position="68"/>
    </location>
    <ligand>
        <name>NADP(+)</name>
        <dbReference type="ChEBI" id="CHEBI:58349"/>
    </ligand>
</feature>
<feature type="binding site" evidence="1">
    <location>
        <position position="76"/>
    </location>
    <ligand>
        <name>NADP(+)</name>
        <dbReference type="ChEBI" id="CHEBI:58349"/>
    </ligand>
</feature>
<feature type="binding site" evidence="1">
    <location>
        <position position="78"/>
    </location>
    <ligand>
        <name>NADP(+)</name>
        <dbReference type="ChEBI" id="CHEBI:58349"/>
    </ligand>
</feature>
<feature type="binding site" evidence="1">
    <location>
        <begin position="108"/>
        <end position="110"/>
    </location>
    <ligand>
        <name>NADP(+)</name>
        <dbReference type="ChEBI" id="CHEBI:58349"/>
    </ligand>
</feature>
<feature type="binding site" evidence="1">
    <location>
        <position position="158"/>
    </location>
    <ligand>
        <name>NADP(+)</name>
        <dbReference type="ChEBI" id="CHEBI:58349"/>
    </ligand>
</feature>
<feature type="binding site" evidence="1">
    <location>
        <position position="217"/>
    </location>
    <ligand>
        <name>Mg(2+)</name>
        <dbReference type="ChEBI" id="CHEBI:18420"/>
        <label>1</label>
    </ligand>
</feature>
<feature type="binding site" evidence="1">
    <location>
        <position position="217"/>
    </location>
    <ligand>
        <name>Mg(2+)</name>
        <dbReference type="ChEBI" id="CHEBI:18420"/>
        <label>2</label>
    </ligand>
</feature>
<feature type="binding site" evidence="1">
    <location>
        <position position="221"/>
    </location>
    <ligand>
        <name>Mg(2+)</name>
        <dbReference type="ChEBI" id="CHEBI:18420"/>
        <label>1</label>
    </ligand>
</feature>
<feature type="binding site" evidence="1">
    <location>
        <position position="389"/>
    </location>
    <ligand>
        <name>Mg(2+)</name>
        <dbReference type="ChEBI" id="CHEBI:18420"/>
        <label>2</label>
    </ligand>
</feature>
<feature type="binding site" evidence="1">
    <location>
        <position position="393"/>
    </location>
    <ligand>
        <name>Mg(2+)</name>
        <dbReference type="ChEBI" id="CHEBI:18420"/>
        <label>2</label>
    </ligand>
</feature>
<feature type="binding site" evidence="1">
    <location>
        <position position="414"/>
    </location>
    <ligand>
        <name>substrate</name>
    </ligand>
</feature>
<proteinExistence type="inferred from homology"/>
<name>ILVC_CYTH3</name>
<reference key="1">
    <citation type="journal article" date="2007" name="Appl. Environ. Microbiol.">
        <title>Genome sequence of the cellulolytic gliding bacterium Cytophaga hutchinsonii.</title>
        <authorList>
            <person name="Xie G."/>
            <person name="Bruce D.C."/>
            <person name="Challacombe J.F."/>
            <person name="Chertkov O."/>
            <person name="Detter J.C."/>
            <person name="Gilna P."/>
            <person name="Han C.S."/>
            <person name="Lucas S."/>
            <person name="Misra M."/>
            <person name="Myers G.L."/>
            <person name="Richardson P."/>
            <person name="Tapia R."/>
            <person name="Thayer N."/>
            <person name="Thompson L.S."/>
            <person name="Brettin T.S."/>
            <person name="Henrissat B."/>
            <person name="Wilson D.B."/>
            <person name="McBride M.J."/>
        </authorList>
    </citation>
    <scope>NUCLEOTIDE SEQUENCE [LARGE SCALE GENOMIC DNA]</scope>
    <source>
        <strain>ATCC 33406 / DSM 1761 / JCM 20678 / CIP 103989 / IAM 12607 / NBRC 15051 / NCIMB 9469 / D465</strain>
    </source>
</reference>
<organism>
    <name type="scientific">Cytophaga hutchinsonii (strain ATCC 33406 / DSM 1761 / CIP 103989 / NBRC 15051 / NCIMB 9469 / D465)</name>
    <dbReference type="NCBI Taxonomy" id="269798"/>
    <lineage>
        <taxon>Bacteria</taxon>
        <taxon>Pseudomonadati</taxon>
        <taxon>Bacteroidota</taxon>
        <taxon>Cytophagia</taxon>
        <taxon>Cytophagales</taxon>
        <taxon>Cytophagaceae</taxon>
        <taxon>Cytophaga</taxon>
    </lineage>
</organism>
<protein>
    <recommendedName>
        <fullName evidence="1">Ketol-acid reductoisomerase (NADP(+))</fullName>
        <shortName evidence="1">KARI</shortName>
        <ecNumber evidence="1">1.1.1.86</ecNumber>
    </recommendedName>
    <alternativeName>
        <fullName evidence="1">Acetohydroxy-acid isomeroreductase</fullName>
        <shortName evidence="1">AHIR</shortName>
    </alternativeName>
    <alternativeName>
        <fullName evidence="1">Alpha-keto-beta-hydroxylacyl reductoisomerase</fullName>
    </alternativeName>
    <alternativeName>
        <fullName evidence="1">Ketol-acid reductoisomerase type 2</fullName>
    </alternativeName>
    <alternativeName>
        <fullName evidence="1">Ketol-acid reductoisomerase type II</fullName>
    </alternativeName>
</protein>